<evidence type="ECO:0000250" key="1">
    <source>
        <dbReference type="UniProtKB" id="Q1K8B6"/>
    </source>
</evidence>
<evidence type="ECO:0000255" key="2"/>
<evidence type="ECO:0000255" key="3">
    <source>
        <dbReference type="PROSITE-ProRule" id="PRU00597"/>
    </source>
</evidence>
<evidence type="ECO:0000269" key="4">
    <source>
    </source>
</evidence>
<evidence type="ECO:0000303" key="5">
    <source>
    </source>
</evidence>
<evidence type="ECO:0000305" key="6"/>
<evidence type="ECO:0007744" key="7">
    <source>
        <dbReference type="PDB" id="5FOH"/>
    </source>
</evidence>
<evidence type="ECO:0007829" key="8">
    <source>
        <dbReference type="PDB" id="5FOH"/>
    </source>
</evidence>
<gene>
    <name type="primary">gh61-1</name>
    <name evidence="5" type="synonym">LPMO9A</name>
    <name type="ORF">NCU02240</name>
</gene>
<dbReference type="EC" id="1.14.99.56" evidence="4"/>
<dbReference type="EMBL" id="CM002242">
    <property type="protein sequence ID" value="EAA30263.1"/>
    <property type="molecule type" value="Genomic_DNA"/>
</dbReference>
<dbReference type="RefSeq" id="XP_959499.1">
    <property type="nucleotide sequence ID" value="XM_954406.2"/>
</dbReference>
<dbReference type="PDB" id="5FOH">
    <property type="method" value="X-ray"/>
    <property type="resolution" value="1.60 A"/>
    <property type="chains" value="A=16-238"/>
</dbReference>
<dbReference type="PDBsum" id="5FOH"/>
<dbReference type="SMR" id="Q7S439"/>
<dbReference type="STRING" id="367110.Q7S439"/>
<dbReference type="CAZy" id="AA9">
    <property type="family name" value="Auxiliary Activities 9"/>
</dbReference>
<dbReference type="CAZy" id="CBM1">
    <property type="family name" value="Carbohydrate-Binding Module Family 1"/>
</dbReference>
<dbReference type="GlyCosmos" id="Q7S439">
    <property type="glycosylation" value="2 sites, No reported glycans"/>
</dbReference>
<dbReference type="PaxDb" id="5141-EFNCRP00000003121"/>
<dbReference type="EnsemblFungi" id="EAA30263">
    <property type="protein sequence ID" value="EAA30263"/>
    <property type="gene ID" value="NCU02240"/>
</dbReference>
<dbReference type="GeneID" id="3875648"/>
<dbReference type="KEGG" id="ncr:NCU02240"/>
<dbReference type="VEuPathDB" id="FungiDB:NCU02240"/>
<dbReference type="HOGENOM" id="CLU_031730_0_2_1"/>
<dbReference type="InParanoid" id="Q7S439"/>
<dbReference type="OMA" id="QAHTIFV"/>
<dbReference type="OrthoDB" id="5558646at2759"/>
<dbReference type="Proteomes" id="UP000001805">
    <property type="component" value="Chromosome 7, Linkage Group VII"/>
</dbReference>
<dbReference type="GO" id="GO:0005576">
    <property type="term" value="C:extracellular region"/>
    <property type="evidence" value="ECO:0007669"/>
    <property type="project" value="UniProtKB-SubCell"/>
</dbReference>
<dbReference type="GO" id="GO:0030248">
    <property type="term" value="F:cellulose binding"/>
    <property type="evidence" value="ECO:0007669"/>
    <property type="project" value="InterPro"/>
</dbReference>
<dbReference type="GO" id="GO:0046872">
    <property type="term" value="F:metal ion binding"/>
    <property type="evidence" value="ECO:0007669"/>
    <property type="project" value="UniProtKB-KW"/>
</dbReference>
<dbReference type="GO" id="GO:0004497">
    <property type="term" value="F:monooxygenase activity"/>
    <property type="evidence" value="ECO:0007669"/>
    <property type="project" value="UniProtKB-KW"/>
</dbReference>
<dbReference type="GO" id="GO:0030245">
    <property type="term" value="P:cellulose catabolic process"/>
    <property type="evidence" value="ECO:0007669"/>
    <property type="project" value="UniProtKB-KW"/>
</dbReference>
<dbReference type="CDD" id="cd21175">
    <property type="entry name" value="LPMO_AA9"/>
    <property type="match status" value="1"/>
</dbReference>
<dbReference type="Gene3D" id="2.70.50.70">
    <property type="match status" value="1"/>
</dbReference>
<dbReference type="InterPro" id="IPR049892">
    <property type="entry name" value="AA9"/>
</dbReference>
<dbReference type="InterPro" id="IPR005103">
    <property type="entry name" value="AA9_LPMO"/>
</dbReference>
<dbReference type="InterPro" id="IPR035971">
    <property type="entry name" value="CBD_sf"/>
</dbReference>
<dbReference type="InterPro" id="IPR000254">
    <property type="entry name" value="Cellulose-bd_dom_fun"/>
</dbReference>
<dbReference type="PANTHER" id="PTHR33353:SF18">
    <property type="entry name" value="ENDOGLUCANASE II"/>
    <property type="match status" value="1"/>
</dbReference>
<dbReference type="PANTHER" id="PTHR33353">
    <property type="entry name" value="PUTATIVE (AFU_ORTHOLOGUE AFUA_1G12560)-RELATED"/>
    <property type="match status" value="1"/>
</dbReference>
<dbReference type="Pfam" id="PF03443">
    <property type="entry name" value="AA9"/>
    <property type="match status" value="1"/>
</dbReference>
<dbReference type="Pfam" id="PF00734">
    <property type="entry name" value="CBM_1"/>
    <property type="match status" value="1"/>
</dbReference>
<dbReference type="SMART" id="SM00236">
    <property type="entry name" value="fCBD"/>
    <property type="match status" value="1"/>
</dbReference>
<dbReference type="SUPFAM" id="SSF57180">
    <property type="entry name" value="Cellulose-binding domain"/>
    <property type="match status" value="1"/>
</dbReference>
<dbReference type="PROSITE" id="PS00562">
    <property type="entry name" value="CBM1_1"/>
    <property type="match status" value="1"/>
</dbReference>
<dbReference type="PROSITE" id="PS51164">
    <property type="entry name" value="CBM1_2"/>
    <property type="match status" value="1"/>
</dbReference>
<protein>
    <recommendedName>
        <fullName evidence="5">AA9 family lytic polysaccharide monooxygenase A</fullName>
        <shortName evidence="5">LPMO9A</shortName>
        <ecNumber evidence="4">1.14.99.56</ecNumber>
    </recommendedName>
    <alternativeName>
        <fullName evidence="6">Endo-1,4-beta-glucanase LPMO9A</fullName>
        <shortName evidence="6">Endoglucanase LPMO9A</shortName>
    </alternativeName>
    <alternativeName>
        <fullName evidence="6">Glycosyl hydrolase 61 family protein 1</fullName>
    </alternativeName>
</protein>
<feature type="signal peptide" evidence="2">
    <location>
        <begin position="1"/>
        <end position="15"/>
    </location>
</feature>
<feature type="chain" id="PRO_5012677930" description="AA9 family lytic polysaccharide monooxygenase A">
    <location>
        <begin position="16"/>
        <end position="322"/>
    </location>
</feature>
<feature type="domain" description="CBM1" evidence="3">
    <location>
        <begin position="286"/>
        <end position="322"/>
    </location>
</feature>
<feature type="binding site" evidence="4 7">
    <location>
        <position position="16"/>
    </location>
    <ligand>
        <name>Cu(2+)</name>
        <dbReference type="ChEBI" id="CHEBI:29036"/>
    </ligand>
</feature>
<feature type="binding site" evidence="4 7">
    <location>
        <position position="96"/>
    </location>
    <ligand>
        <name>Cu(2+)</name>
        <dbReference type="ChEBI" id="CHEBI:29036"/>
    </ligand>
</feature>
<feature type="binding site" evidence="1">
    <location>
        <position position="168"/>
    </location>
    <ligand>
        <name>O2</name>
        <dbReference type="ChEBI" id="CHEBI:15379"/>
    </ligand>
</feature>
<feature type="binding site" evidence="1">
    <location>
        <position position="177"/>
    </location>
    <ligand>
        <name>O2</name>
        <dbReference type="ChEBI" id="CHEBI:15379"/>
    </ligand>
</feature>
<feature type="glycosylation site" description="O-linked (Man...) threonine" evidence="4 7">
    <location>
        <position position="228"/>
    </location>
</feature>
<feature type="glycosylation site" description="O-linked (Man...) threonine" evidence="4 7">
    <location>
        <position position="236"/>
    </location>
</feature>
<feature type="disulfide bond" evidence="4 7">
    <location>
        <begin position="54"/>
        <end position="182"/>
    </location>
</feature>
<feature type="disulfide bond" evidence="4 7">
    <location>
        <begin position="152"/>
        <end position="237"/>
    </location>
</feature>
<feature type="strand" evidence="8">
    <location>
        <begin position="18"/>
        <end position="24"/>
    </location>
</feature>
<feature type="turn" evidence="8">
    <location>
        <begin position="31"/>
        <end position="34"/>
    </location>
</feature>
<feature type="strand" evidence="8">
    <location>
        <begin position="38"/>
        <end position="40"/>
    </location>
</feature>
<feature type="helix" evidence="8">
    <location>
        <begin position="50"/>
        <end position="52"/>
    </location>
</feature>
<feature type="strand" evidence="8">
    <location>
        <begin position="68"/>
        <end position="71"/>
    </location>
</feature>
<feature type="strand" evidence="8">
    <location>
        <begin position="75"/>
        <end position="83"/>
    </location>
</feature>
<feature type="strand" evidence="8">
    <location>
        <begin position="100"/>
        <end position="106"/>
    </location>
</feature>
<feature type="turn" evidence="8">
    <location>
        <begin position="110"/>
        <end position="112"/>
    </location>
</feature>
<feature type="strand" evidence="8">
    <location>
        <begin position="117"/>
        <end position="126"/>
    </location>
</feature>
<feature type="helix" evidence="8">
    <location>
        <begin position="134"/>
        <end position="140"/>
    </location>
</feature>
<feature type="strand" evidence="8">
    <location>
        <begin position="143"/>
        <end position="148"/>
    </location>
</feature>
<feature type="strand" evidence="8">
    <location>
        <begin position="151"/>
        <end position="153"/>
    </location>
</feature>
<feature type="strand" evidence="8">
    <location>
        <begin position="155"/>
        <end position="166"/>
    </location>
</feature>
<feature type="turn" evidence="8">
    <location>
        <begin position="168"/>
        <end position="171"/>
    </location>
</feature>
<feature type="strand" evidence="8">
    <location>
        <begin position="177"/>
        <end position="188"/>
    </location>
</feature>
<feature type="strand" evidence="8">
    <location>
        <begin position="201"/>
        <end position="203"/>
    </location>
</feature>
<feature type="turn" evidence="8">
    <location>
        <begin position="212"/>
        <end position="214"/>
    </location>
</feature>
<feature type="helix" evidence="8">
    <location>
        <begin position="218"/>
        <end position="220"/>
    </location>
</feature>
<feature type="strand" evidence="8">
    <location>
        <begin position="230"/>
        <end position="232"/>
    </location>
</feature>
<sequence length="322" mass="32802">MKVLSLLAAASAASAHTIFVQLEADGTTYPVSYGIRTPSYDGPITDVTSNDLACNGGPNPTTPSDKIITVNAGSTVKAIWRHTLTSGADDVMDASHKGPTLAYLKKVDDALTDTGIGGGWFKIQEDGYNNGQWGTSTVITNGGFQYIDIPACIPSGQYLLRAEMIALHAASSTAGAQLYMECAQINIVGGTGGTALPSTTYSIPGIYKATDPGLLVNIYSMSPSSTYTIPGPAKFTCPAGNGGGAGGGGSTTTAKPASSTTSKAAITSAVTTLKTSVVAPQPTGGCTAAQWAQCGGMGFSGCTTCASPYTCKKMNDYYSQCS</sequence>
<proteinExistence type="evidence at protein level"/>
<name>LP9A_NEUCR</name>
<organism>
    <name type="scientific">Neurospora crassa (strain ATCC 24698 / 74-OR23-1A / CBS 708.71 / DSM 1257 / FGSC 987)</name>
    <dbReference type="NCBI Taxonomy" id="367110"/>
    <lineage>
        <taxon>Eukaryota</taxon>
        <taxon>Fungi</taxon>
        <taxon>Dikarya</taxon>
        <taxon>Ascomycota</taxon>
        <taxon>Pezizomycotina</taxon>
        <taxon>Sordariomycetes</taxon>
        <taxon>Sordariomycetidae</taxon>
        <taxon>Sordariales</taxon>
        <taxon>Sordariaceae</taxon>
        <taxon>Neurospora</taxon>
    </lineage>
</organism>
<comment type="function">
    <text evidence="4">Lytic polysaccharide monooxygenase (LPMO) that depolymerizes crystalline and amorphous polysaccharides via the oxidation of scissile alpha- or beta-(1-4)-glycosidic bonds, yielding C4 oxidation products (PubMed:31431506). Catalysis by LPMOs requires the reduction of the active-site copper from Cu(II) to Cu(I) by a reducing agent and H(2)O(2) or O(2) as a cosubstrate (PubMed:31431506). Active on tamarind xyloglucan and konjac glucomannan (PubMed:31431506).</text>
</comment>
<comment type="catalytic activity">
    <reaction evidence="4">
        <text>[(1-&gt;4)-beta-D-glucosyl]n+m + reduced acceptor + O2 = 4-dehydro-beta-D-glucosyl-[(1-&gt;4)-beta-D-glucosyl]n-1 + [(1-&gt;4)-beta-D-glucosyl]m + acceptor + H2O.</text>
        <dbReference type="EC" id="1.14.99.56"/>
    </reaction>
</comment>
<comment type="cofactor">
    <cofactor evidence="4">
        <name>Cu(2+)</name>
        <dbReference type="ChEBI" id="CHEBI:29036"/>
    </cofactor>
    <text evidence="4">Binds 1 copper ion per subunit.</text>
</comment>
<comment type="subcellular location">
    <subcellularLocation>
        <location evidence="6">Secreted</location>
    </subcellularLocation>
</comment>
<comment type="domain">
    <text evidence="4">Has a modular structure: an endo-beta-1,4-glucanase catalytic module at the N-terminus, a linker rich in serines and threonines, and a C-terminal carbohydrate-binding module (CBM). The CBM domain is essential for binding to and subsequent oxidative degradation of polysaccharide substrate.</text>
</comment>
<comment type="biotechnology">
    <text evidence="4">Lignocellulose is the most abundant polymeric composite on Earth and is a recalcitrant but promising renewable substrate for industrial biotechnology applications. Together with cellobiose dehydrogenases (CDHs) an enzymatic system capable of oxidative cellulose cleavage is formed, which increases the efficiency of cellulases and put LPMOs at focus of biofuel research.</text>
</comment>
<comment type="similarity">
    <text evidence="6">Belongs to the polysaccharide monooxygenase AA9 family.</text>
</comment>
<accession>Q7S439</accession>
<keyword id="KW-0002">3D-structure</keyword>
<keyword id="KW-0119">Carbohydrate metabolism</keyword>
<keyword id="KW-0136">Cellulose degradation</keyword>
<keyword id="KW-0186">Copper</keyword>
<keyword id="KW-1015">Disulfide bond</keyword>
<keyword id="KW-0325">Glycoprotein</keyword>
<keyword id="KW-0479">Metal-binding</keyword>
<keyword id="KW-0503">Monooxygenase</keyword>
<keyword id="KW-0560">Oxidoreductase</keyword>
<keyword id="KW-0624">Polysaccharide degradation</keyword>
<keyword id="KW-1185">Reference proteome</keyword>
<keyword id="KW-0964">Secreted</keyword>
<keyword id="KW-0732">Signal</keyword>
<reference key="1">
    <citation type="journal article" date="2003" name="Nature">
        <title>The genome sequence of the filamentous fungus Neurospora crassa.</title>
        <authorList>
            <person name="Galagan J.E."/>
            <person name="Calvo S.E."/>
            <person name="Borkovich K.A."/>
            <person name="Selker E.U."/>
            <person name="Read N.D."/>
            <person name="Jaffe D.B."/>
            <person name="FitzHugh W."/>
            <person name="Ma L.-J."/>
            <person name="Smirnov S."/>
            <person name="Purcell S."/>
            <person name="Rehman B."/>
            <person name="Elkins T."/>
            <person name="Engels R."/>
            <person name="Wang S."/>
            <person name="Nielsen C.B."/>
            <person name="Butler J."/>
            <person name="Endrizzi M."/>
            <person name="Qui D."/>
            <person name="Ianakiev P."/>
            <person name="Bell-Pedersen D."/>
            <person name="Nelson M.A."/>
            <person name="Werner-Washburne M."/>
            <person name="Selitrennikoff C.P."/>
            <person name="Kinsey J.A."/>
            <person name="Braun E.L."/>
            <person name="Zelter A."/>
            <person name="Schulte U."/>
            <person name="Kothe G.O."/>
            <person name="Jedd G."/>
            <person name="Mewes H.-W."/>
            <person name="Staben C."/>
            <person name="Marcotte E."/>
            <person name="Greenberg D."/>
            <person name="Roy A."/>
            <person name="Foley K."/>
            <person name="Naylor J."/>
            <person name="Stange-Thomann N."/>
            <person name="Barrett R."/>
            <person name="Gnerre S."/>
            <person name="Kamal M."/>
            <person name="Kamvysselis M."/>
            <person name="Mauceli E.W."/>
            <person name="Bielke C."/>
            <person name="Rudd S."/>
            <person name="Frishman D."/>
            <person name="Krystofova S."/>
            <person name="Rasmussen C."/>
            <person name="Metzenberg R.L."/>
            <person name="Perkins D.D."/>
            <person name="Kroken S."/>
            <person name="Cogoni C."/>
            <person name="Macino G."/>
            <person name="Catcheside D.E.A."/>
            <person name="Li W."/>
            <person name="Pratt R.J."/>
            <person name="Osmani S.A."/>
            <person name="DeSouza C.P.C."/>
            <person name="Glass N.L."/>
            <person name="Orbach M.J."/>
            <person name="Berglund J.A."/>
            <person name="Voelker R."/>
            <person name="Yarden O."/>
            <person name="Plamann M."/>
            <person name="Seiler S."/>
            <person name="Dunlap J.C."/>
            <person name="Radford A."/>
            <person name="Aramayo R."/>
            <person name="Natvig D.O."/>
            <person name="Alex L.A."/>
            <person name="Mannhaupt G."/>
            <person name="Ebbole D.J."/>
            <person name="Freitag M."/>
            <person name="Paulsen I."/>
            <person name="Sachs M.S."/>
            <person name="Lander E.S."/>
            <person name="Nusbaum C."/>
            <person name="Birren B.W."/>
        </authorList>
    </citation>
    <scope>NUCLEOTIDE SEQUENCE [LARGE SCALE GENOMIC DNA]</scope>
    <source>
        <strain>ATCC 24698 / 74-OR23-1A / CBS 708.71 / DSM 1257 / FGSC 987</strain>
    </source>
</reference>
<reference evidence="7" key="2">
    <citation type="journal article" date="2019" name="J. Biol. Chem.">
        <title>Comparison of three seemingly similar lytic polysaccharide monooxygenases from Neurospora crassa suggests different roles in plant biomass degradation.</title>
        <authorList>
            <person name="Petrovic D.M."/>
            <person name="Varnai A."/>
            <person name="Dimarogona M."/>
            <person name="Mathiesen G."/>
            <person name="Sandgren M."/>
            <person name="Westereng B."/>
            <person name="Eijsink V.G.H."/>
        </authorList>
    </citation>
    <scope>X-RAY CRYSTALLOGRAPHY (1.60 ANGSTROMS) OF 16-238 IN COMPLEX WITH COPPER</scope>
    <scope>GLYCOSYLATION AT THR-228 AND THR-236</scope>
    <scope>DISULFIDE BONDS</scope>
    <scope>FUNCTION</scope>
    <scope>CATALYTIC ACTIVITY</scope>
    <scope>DOMAIN</scope>
</reference>